<feature type="chain" id="PRO_0000405115" description="Lissencephaly-1 homolog">
    <location>
        <begin position="1"/>
        <end position="410"/>
    </location>
</feature>
<feature type="domain" description="LisH" evidence="1">
    <location>
        <begin position="7"/>
        <end position="39"/>
    </location>
</feature>
<feature type="repeat" description="WD 1">
    <location>
        <begin position="104"/>
        <end position="143"/>
    </location>
</feature>
<feature type="repeat" description="WD 2">
    <location>
        <begin position="146"/>
        <end position="185"/>
    </location>
</feature>
<feature type="repeat" description="WD 3">
    <location>
        <begin position="188"/>
        <end position="227"/>
    </location>
</feature>
<feature type="repeat" description="WD 4">
    <location>
        <begin position="230"/>
        <end position="269"/>
    </location>
</feature>
<feature type="repeat" description="WD 5">
    <location>
        <begin position="294"/>
        <end position="333"/>
    </location>
</feature>
<feature type="repeat" description="WD 6">
    <location>
        <begin position="336"/>
        <end position="375"/>
    </location>
</feature>
<feature type="repeat" description="WD 7">
    <location>
        <begin position="378"/>
        <end position="410"/>
    </location>
</feature>
<feature type="coiled-coil region" evidence="1">
    <location>
        <begin position="55"/>
        <end position="80"/>
    </location>
</feature>
<comment type="function">
    <text evidence="1">Positively regulates the activity of the minus-end directed microtubule motor protein dynein. May enhance dynein-mediated microtubule sliding by targeting dynein to the microtubule plus end. Required for several dynein- and microtubule-dependent processes.</text>
</comment>
<comment type="subcellular location">
    <subcellularLocation>
        <location evidence="1">Cytoplasm</location>
        <location evidence="1">Cytoskeleton</location>
    </subcellularLocation>
    <subcellularLocation>
        <location evidence="1">Cytoplasm</location>
        <location evidence="1">Cytoskeleton</location>
        <location evidence="1">Microtubule organizing center</location>
        <location evidence="1">Centrosome</location>
    </subcellularLocation>
    <text evidence="1">Localizes to the plus end of microtubules and to the centrosome.</text>
</comment>
<comment type="domain">
    <text evidence="1">Dimerization mediated by the LisH domain may be required to activate dynein.</text>
</comment>
<comment type="similarity">
    <text evidence="1">Belongs to the WD repeat LIS1/nudF family.</text>
</comment>
<protein>
    <recommendedName>
        <fullName evidence="1">Lissencephaly-1 homolog</fullName>
    </recommendedName>
</protein>
<proteinExistence type="inferred from homology"/>
<accession>A9V790</accession>
<evidence type="ECO:0000255" key="1">
    <source>
        <dbReference type="HAMAP-Rule" id="MF_03141"/>
    </source>
</evidence>
<dbReference type="EMBL" id="CH991565">
    <property type="protein sequence ID" value="EDQ86544.1"/>
    <property type="molecule type" value="Genomic_DNA"/>
</dbReference>
<dbReference type="RefSeq" id="XP_001748657.1">
    <property type="nucleotide sequence ID" value="XM_001748605.1"/>
</dbReference>
<dbReference type="SMR" id="A9V790"/>
<dbReference type="FunCoup" id="A9V790">
    <property type="interactions" value="1070"/>
</dbReference>
<dbReference type="STRING" id="81824.A9V790"/>
<dbReference type="EnsemblProtists" id="EDQ86544">
    <property type="protein sequence ID" value="EDQ86544"/>
    <property type="gene ID" value="MONBRDRAFT_35260"/>
</dbReference>
<dbReference type="KEGG" id="mbr:MONBRDRAFT_35260"/>
<dbReference type="eggNOG" id="KOG0295">
    <property type="taxonomic scope" value="Eukaryota"/>
</dbReference>
<dbReference type="InParanoid" id="A9V790"/>
<dbReference type="OMA" id="RGTCLMT"/>
<dbReference type="Proteomes" id="UP000001357">
    <property type="component" value="Unassembled WGS sequence"/>
</dbReference>
<dbReference type="GO" id="GO:0005813">
    <property type="term" value="C:centrosome"/>
    <property type="evidence" value="ECO:0007669"/>
    <property type="project" value="UniProtKB-SubCell"/>
</dbReference>
<dbReference type="GO" id="GO:0005881">
    <property type="term" value="C:cytoplasmic microtubule"/>
    <property type="evidence" value="ECO:0000318"/>
    <property type="project" value="GO_Central"/>
</dbReference>
<dbReference type="GO" id="GO:0000776">
    <property type="term" value="C:kinetochore"/>
    <property type="evidence" value="ECO:0000318"/>
    <property type="project" value="GO_Central"/>
</dbReference>
<dbReference type="GO" id="GO:0005875">
    <property type="term" value="C:microtubule associated complex"/>
    <property type="evidence" value="ECO:0000318"/>
    <property type="project" value="GO_Central"/>
</dbReference>
<dbReference type="GO" id="GO:0005635">
    <property type="term" value="C:nuclear envelope"/>
    <property type="evidence" value="ECO:0000318"/>
    <property type="project" value="GO_Central"/>
</dbReference>
<dbReference type="GO" id="GO:0070840">
    <property type="term" value="F:dynein complex binding"/>
    <property type="evidence" value="ECO:0000318"/>
    <property type="project" value="GO_Central"/>
</dbReference>
<dbReference type="GO" id="GO:0051010">
    <property type="term" value="F:microtubule plus-end binding"/>
    <property type="evidence" value="ECO:0000318"/>
    <property type="project" value="GO_Central"/>
</dbReference>
<dbReference type="GO" id="GO:0051301">
    <property type="term" value="P:cell division"/>
    <property type="evidence" value="ECO:0007669"/>
    <property type="project" value="UniProtKB-KW"/>
</dbReference>
<dbReference type="GO" id="GO:0000132">
    <property type="term" value="P:establishment of mitotic spindle orientation"/>
    <property type="evidence" value="ECO:0000318"/>
    <property type="project" value="GO_Central"/>
</dbReference>
<dbReference type="GO" id="GO:0031023">
    <property type="term" value="P:microtubule organizing center organization"/>
    <property type="evidence" value="ECO:0000318"/>
    <property type="project" value="GO_Central"/>
</dbReference>
<dbReference type="GO" id="GO:0051012">
    <property type="term" value="P:microtubule sliding"/>
    <property type="evidence" value="ECO:0007669"/>
    <property type="project" value="UniProtKB-UniRule"/>
</dbReference>
<dbReference type="GO" id="GO:0007097">
    <property type="term" value="P:nuclear migration"/>
    <property type="evidence" value="ECO:0000318"/>
    <property type="project" value="GO_Central"/>
</dbReference>
<dbReference type="GO" id="GO:0047496">
    <property type="term" value="P:vesicle transport along microtubule"/>
    <property type="evidence" value="ECO:0000318"/>
    <property type="project" value="GO_Central"/>
</dbReference>
<dbReference type="CDD" id="cd00200">
    <property type="entry name" value="WD40"/>
    <property type="match status" value="1"/>
</dbReference>
<dbReference type="FunFam" id="2.130.10.10:FF:001547">
    <property type="entry name" value="Nuclear distribution protein PAC1"/>
    <property type="match status" value="1"/>
</dbReference>
<dbReference type="FunFam" id="1.20.960.30:FF:000002">
    <property type="entry name" value="Platelet-activating factor acetylhydrolase ib"/>
    <property type="match status" value="1"/>
</dbReference>
<dbReference type="Gene3D" id="1.20.960.30">
    <property type="match status" value="1"/>
</dbReference>
<dbReference type="Gene3D" id="2.130.10.10">
    <property type="entry name" value="YVTN repeat-like/Quinoprotein amine dehydrogenase"/>
    <property type="match status" value="1"/>
</dbReference>
<dbReference type="HAMAP" id="MF_03141">
    <property type="entry name" value="lis1"/>
    <property type="match status" value="1"/>
</dbReference>
<dbReference type="InterPro" id="IPR017252">
    <property type="entry name" value="Dynein_regulator_LIS1"/>
</dbReference>
<dbReference type="InterPro" id="IPR020472">
    <property type="entry name" value="G-protein_beta_WD-40_rep"/>
</dbReference>
<dbReference type="InterPro" id="IPR037190">
    <property type="entry name" value="LIS1_N"/>
</dbReference>
<dbReference type="InterPro" id="IPR006594">
    <property type="entry name" value="LisH"/>
</dbReference>
<dbReference type="InterPro" id="IPR015943">
    <property type="entry name" value="WD40/YVTN_repeat-like_dom_sf"/>
</dbReference>
<dbReference type="InterPro" id="IPR019775">
    <property type="entry name" value="WD40_repeat_CS"/>
</dbReference>
<dbReference type="InterPro" id="IPR036322">
    <property type="entry name" value="WD40_repeat_dom_sf"/>
</dbReference>
<dbReference type="InterPro" id="IPR001680">
    <property type="entry name" value="WD40_rpt"/>
</dbReference>
<dbReference type="PANTHER" id="PTHR19848:SF8">
    <property type="entry name" value="F-BOX AND WD REPEAT DOMAIN CONTAINING 7"/>
    <property type="match status" value="1"/>
</dbReference>
<dbReference type="PANTHER" id="PTHR19848">
    <property type="entry name" value="WD40 REPEAT PROTEIN"/>
    <property type="match status" value="1"/>
</dbReference>
<dbReference type="Pfam" id="PF00400">
    <property type="entry name" value="WD40"/>
    <property type="match status" value="6"/>
</dbReference>
<dbReference type="PIRSF" id="PIRSF037647">
    <property type="entry name" value="Dynein_regulator_Lis1"/>
    <property type="match status" value="1"/>
</dbReference>
<dbReference type="PRINTS" id="PR00320">
    <property type="entry name" value="GPROTEINBRPT"/>
</dbReference>
<dbReference type="SMART" id="SM00320">
    <property type="entry name" value="WD40"/>
    <property type="match status" value="7"/>
</dbReference>
<dbReference type="SUPFAM" id="SSF109925">
    <property type="entry name" value="Lissencephaly-1 protein (Lis-1, PAF-AH alpha) N-terminal domain"/>
    <property type="match status" value="1"/>
</dbReference>
<dbReference type="SUPFAM" id="SSF50978">
    <property type="entry name" value="WD40 repeat-like"/>
    <property type="match status" value="1"/>
</dbReference>
<dbReference type="PROSITE" id="PS50896">
    <property type="entry name" value="LISH"/>
    <property type="match status" value="1"/>
</dbReference>
<dbReference type="PROSITE" id="PS00678">
    <property type="entry name" value="WD_REPEATS_1"/>
    <property type="match status" value="5"/>
</dbReference>
<dbReference type="PROSITE" id="PS50082">
    <property type="entry name" value="WD_REPEATS_2"/>
    <property type="match status" value="6"/>
</dbReference>
<dbReference type="PROSITE" id="PS50294">
    <property type="entry name" value="WD_REPEATS_REGION"/>
    <property type="match status" value="1"/>
</dbReference>
<keyword id="KW-0131">Cell cycle</keyword>
<keyword id="KW-0132">Cell division</keyword>
<keyword id="KW-0175">Coiled coil</keyword>
<keyword id="KW-0963">Cytoplasm</keyword>
<keyword id="KW-0206">Cytoskeleton</keyword>
<keyword id="KW-0493">Microtubule</keyword>
<keyword id="KW-0498">Mitosis</keyword>
<keyword id="KW-1185">Reference proteome</keyword>
<keyword id="KW-0677">Repeat</keyword>
<keyword id="KW-0813">Transport</keyword>
<keyword id="KW-0853">WD repeat</keyword>
<gene>
    <name type="ORF">35260</name>
</gene>
<name>LIS1_MONBE</name>
<sequence length="410" mass="45189">MVLTARQQEELQLAVHAYLVEAGHAEAAAAMAKSANLGDDAGDAKYTGLLEKKWTTITRLQKRNMELQAEVEELRSSARAPRSRTTTKMEEWVPRPPATVAVDGHRLPITAVAIHPSFAVMASASEDASIKLWDMESGNFERSLKGHTNAVNDIAYDREGNRLVSCSTDMTIKVWNMDNFTCTKTLSGHDHTVSSVRFDHTGDRVFSASRDKTIKIWELATGYCLQTLQGHSDWVRSIDVSADGAWICSASSDHTVRVWSVASGECKHVWSDHEHVVEHASFAPLVAHEALNLMIFGSKPSAEAASKGPFVASASRDKSICLFDVSTGQHLARLTGHDNWVRATAWSRGGRYLFSVADDKTMRVWDIATKRVSKTIPAHNHFVSCIAVHAKNTHVVTGSVDLKVKVWECN</sequence>
<organism>
    <name type="scientific">Monosiga brevicollis</name>
    <name type="common">Choanoflagellate</name>
    <dbReference type="NCBI Taxonomy" id="81824"/>
    <lineage>
        <taxon>Eukaryota</taxon>
        <taxon>Choanoflagellata</taxon>
        <taxon>Craspedida</taxon>
        <taxon>Salpingoecidae</taxon>
        <taxon>Monosiga</taxon>
    </lineage>
</organism>
<reference key="1">
    <citation type="journal article" date="2008" name="Nature">
        <title>The genome of the choanoflagellate Monosiga brevicollis and the origin of metazoans.</title>
        <authorList>
            <consortium name="JGI Sequencing"/>
            <person name="King N."/>
            <person name="Westbrook M.J."/>
            <person name="Young S.L."/>
            <person name="Kuo A."/>
            <person name="Abedin M."/>
            <person name="Chapman J."/>
            <person name="Fairclough S."/>
            <person name="Hellsten U."/>
            <person name="Isogai Y."/>
            <person name="Letunic I."/>
            <person name="Marr M."/>
            <person name="Pincus D."/>
            <person name="Putnam N."/>
            <person name="Rokas A."/>
            <person name="Wright K.J."/>
            <person name="Zuzow R."/>
            <person name="Dirks W."/>
            <person name="Good M."/>
            <person name="Goodstein D."/>
            <person name="Lemons D."/>
            <person name="Li W."/>
            <person name="Lyons J.B."/>
            <person name="Morris A."/>
            <person name="Nichols S."/>
            <person name="Richter D.J."/>
            <person name="Salamov A."/>
            <person name="Bork P."/>
            <person name="Lim W.A."/>
            <person name="Manning G."/>
            <person name="Miller W.T."/>
            <person name="McGinnis W."/>
            <person name="Shapiro H."/>
            <person name="Tjian R."/>
            <person name="Grigoriev I.V."/>
            <person name="Rokhsar D."/>
        </authorList>
    </citation>
    <scope>NUCLEOTIDE SEQUENCE [LARGE SCALE GENOMIC DNA]</scope>
    <source>
        <strain>MX1 / ATCC 50154</strain>
    </source>
</reference>